<feature type="chain" id="PRO_0000046968" description="Protein hunchback">
    <location>
        <begin position="1" status="less than"/>
        <end position="69" status="greater than"/>
    </location>
</feature>
<feature type="zinc finger region" description="C2H2-type 1" evidence="1">
    <location>
        <begin position="1" status="less than"/>
        <end position="11"/>
    </location>
</feature>
<feature type="zinc finger region" description="C2H2-type 2" evidence="1">
    <location>
        <begin position="17"/>
        <end position="39"/>
    </location>
</feature>
<feature type="zinc finger region" description="C2H2-type 3" evidence="1">
    <location>
        <begin position="45"/>
        <end position="69"/>
    </location>
</feature>
<feature type="non-terminal residue">
    <location>
        <position position="1"/>
    </location>
</feature>
<feature type="non-terminal residue">
    <location>
        <position position="69"/>
    </location>
</feature>
<evidence type="ECO:0000255" key="1">
    <source>
        <dbReference type="PROSITE-ProRule" id="PRU00042"/>
    </source>
</evidence>
<evidence type="ECO:0000305" key="2"/>
<organism>
    <name type="scientific">Apis mellifera</name>
    <name type="common">Honeybee</name>
    <dbReference type="NCBI Taxonomy" id="7460"/>
    <lineage>
        <taxon>Eukaryota</taxon>
        <taxon>Metazoa</taxon>
        <taxon>Ecdysozoa</taxon>
        <taxon>Arthropoda</taxon>
        <taxon>Hexapoda</taxon>
        <taxon>Insecta</taxon>
        <taxon>Pterygota</taxon>
        <taxon>Neoptera</taxon>
        <taxon>Endopterygota</taxon>
        <taxon>Hymenoptera</taxon>
        <taxon>Apocrita</taxon>
        <taxon>Aculeata</taxon>
        <taxon>Apoidea</taxon>
        <taxon>Anthophila</taxon>
        <taxon>Apidae</taxon>
        <taxon>Apis</taxon>
    </lineage>
</organism>
<keyword id="KW-0217">Developmental protein</keyword>
<keyword id="KW-0238">DNA-binding</keyword>
<keyword id="KW-0302">Gap protein</keyword>
<keyword id="KW-0479">Metal-binding</keyword>
<keyword id="KW-0539">Nucleus</keyword>
<keyword id="KW-1185">Reference proteome</keyword>
<keyword id="KW-0677">Repeat</keyword>
<keyword id="KW-0862">Zinc</keyword>
<keyword id="KW-0863">Zinc-finger</keyword>
<proteinExistence type="inferred from homology"/>
<name>HUNB_APIME</name>
<comment type="function">
    <text>Gap class segmentation protein that controls development of head structures.</text>
</comment>
<comment type="subcellular location">
    <subcellularLocation>
        <location evidence="2">Nucleus</location>
    </subcellularLocation>
</comment>
<comment type="similarity">
    <text evidence="2">Belongs to the hunchback C2H2-type zinc-finger protein family.</text>
</comment>
<gene>
    <name type="primary">hb</name>
</gene>
<accession>P31504</accession>
<sequence length="69" mass="8291">KHHLEYHLRNHFGSKPFKCEKCSYSCVNKSMLNSHLKSHSNVYQYRCANCTYATKYCHSLKLHLRKYSH</sequence>
<protein>
    <recommendedName>
        <fullName>Protein hunchback</fullName>
    </recommendedName>
</protein>
<reference key="1">
    <citation type="journal article" date="1992" name="Proc. Natl. Acad. Sci. U.S.A.">
        <title>Evolutionary conservation pattern of zinc-finger domains of Drosophila segmentation genes.</title>
        <authorList>
            <person name="Sommer R.J."/>
            <person name="Retzlaff M."/>
            <person name="Goerlich K."/>
            <person name="Sander K."/>
            <person name="Tautz D."/>
        </authorList>
    </citation>
    <scope>NUCLEOTIDE SEQUENCE [GENOMIC DNA]</scope>
</reference>
<dbReference type="EMBL" id="L01587">
    <property type="protein sequence ID" value="AAA27734.1"/>
    <property type="molecule type" value="Genomic_DNA"/>
</dbReference>
<dbReference type="SMR" id="P31504"/>
<dbReference type="STRING" id="7460.P31504"/>
<dbReference type="PaxDb" id="7460-GB50986-PA"/>
<dbReference type="EnsemblMetazoa" id="NM_001252426">
    <property type="protein sequence ID" value="NP_001239355"/>
    <property type="gene ID" value="GeneID_410209"/>
</dbReference>
<dbReference type="eggNOG" id="KOG1721">
    <property type="taxonomic scope" value="Eukaryota"/>
</dbReference>
<dbReference type="InParanoid" id="P31504"/>
<dbReference type="Proteomes" id="UP000005203">
    <property type="component" value="Unplaced"/>
</dbReference>
<dbReference type="GO" id="GO:0005634">
    <property type="term" value="C:nucleus"/>
    <property type="evidence" value="ECO:0007669"/>
    <property type="project" value="UniProtKB-SubCell"/>
</dbReference>
<dbReference type="GO" id="GO:0003677">
    <property type="term" value="F:DNA binding"/>
    <property type="evidence" value="ECO:0007669"/>
    <property type="project" value="UniProtKB-KW"/>
</dbReference>
<dbReference type="GO" id="GO:0008270">
    <property type="term" value="F:zinc ion binding"/>
    <property type="evidence" value="ECO:0007669"/>
    <property type="project" value="UniProtKB-KW"/>
</dbReference>
<dbReference type="GO" id="GO:0035282">
    <property type="term" value="P:segmentation"/>
    <property type="evidence" value="ECO:0007669"/>
    <property type="project" value="UniProtKB-KW"/>
</dbReference>
<dbReference type="FunFam" id="3.30.160.60:FF:001301">
    <property type="entry name" value="Blast:Protein hunchback"/>
    <property type="match status" value="1"/>
</dbReference>
<dbReference type="Gene3D" id="3.30.160.60">
    <property type="entry name" value="Classic Zinc Finger"/>
    <property type="match status" value="1"/>
</dbReference>
<dbReference type="InterPro" id="IPR036236">
    <property type="entry name" value="Znf_C2H2_sf"/>
</dbReference>
<dbReference type="InterPro" id="IPR013087">
    <property type="entry name" value="Znf_C2H2_type"/>
</dbReference>
<dbReference type="SMART" id="SM00355">
    <property type="entry name" value="ZnF_C2H2"/>
    <property type="match status" value="2"/>
</dbReference>
<dbReference type="SUPFAM" id="SSF57667">
    <property type="entry name" value="beta-beta-alpha zinc fingers"/>
    <property type="match status" value="1"/>
</dbReference>
<dbReference type="PROSITE" id="PS00028">
    <property type="entry name" value="ZINC_FINGER_C2H2_1"/>
    <property type="match status" value="1"/>
</dbReference>
<dbReference type="PROSITE" id="PS50157">
    <property type="entry name" value="ZINC_FINGER_C2H2_2"/>
    <property type="match status" value="2"/>
</dbReference>